<gene>
    <name evidence="1" type="primary">rpmJ</name>
    <name type="ordered locus">Lreu_1460</name>
</gene>
<proteinExistence type="inferred from homology"/>
<name>RL36_LIMRD</name>
<accession>A5VLI2</accession>
<feature type="chain" id="PRO_1000059034" description="Large ribosomal subunit protein bL36">
    <location>
        <begin position="1"/>
        <end position="39"/>
    </location>
</feature>
<evidence type="ECO:0000255" key="1">
    <source>
        <dbReference type="HAMAP-Rule" id="MF_00251"/>
    </source>
</evidence>
<evidence type="ECO:0000305" key="2"/>
<sequence>MKVRPSVKKMCEHCKIVKRNGRVMVICSANPKHKQRQGK</sequence>
<keyword id="KW-1185">Reference proteome</keyword>
<keyword id="KW-0687">Ribonucleoprotein</keyword>
<keyword id="KW-0689">Ribosomal protein</keyword>
<reference key="1">
    <citation type="journal article" date="2011" name="PLoS Genet.">
        <title>The evolution of host specialization in the vertebrate gut symbiont Lactobacillus reuteri.</title>
        <authorList>
            <person name="Frese S.A."/>
            <person name="Benson A.K."/>
            <person name="Tannock G.W."/>
            <person name="Loach D.M."/>
            <person name="Kim J."/>
            <person name="Zhang M."/>
            <person name="Oh P.L."/>
            <person name="Heng N.C."/>
            <person name="Patil P.B."/>
            <person name="Juge N."/>
            <person name="Mackenzie D.A."/>
            <person name="Pearson B.M."/>
            <person name="Lapidus A."/>
            <person name="Dalin E."/>
            <person name="Tice H."/>
            <person name="Goltsman E."/>
            <person name="Land M."/>
            <person name="Hauser L."/>
            <person name="Ivanova N."/>
            <person name="Kyrpides N.C."/>
            <person name="Walter J."/>
        </authorList>
    </citation>
    <scope>NUCLEOTIDE SEQUENCE [LARGE SCALE GENOMIC DNA]</scope>
    <source>
        <strain>DSM 20016</strain>
    </source>
</reference>
<protein>
    <recommendedName>
        <fullName evidence="1">Large ribosomal subunit protein bL36</fullName>
    </recommendedName>
    <alternativeName>
        <fullName evidence="2">50S ribosomal protein L36</fullName>
    </alternativeName>
</protein>
<dbReference type="EMBL" id="CP000705">
    <property type="protein sequence ID" value="ABQ83706.1"/>
    <property type="molecule type" value="Genomic_DNA"/>
</dbReference>
<dbReference type="RefSeq" id="WP_003664535.1">
    <property type="nucleotide sequence ID" value="NZ_AZDD01000010.1"/>
</dbReference>
<dbReference type="SMR" id="A5VLI2"/>
<dbReference type="STRING" id="557436.Lreu_1460"/>
<dbReference type="GeneID" id="77191456"/>
<dbReference type="KEGG" id="lre:Lreu_1460"/>
<dbReference type="PATRIC" id="fig|557436.17.peg.163"/>
<dbReference type="eggNOG" id="COG0257">
    <property type="taxonomic scope" value="Bacteria"/>
</dbReference>
<dbReference type="HOGENOM" id="CLU_135723_6_2_9"/>
<dbReference type="Proteomes" id="UP000001991">
    <property type="component" value="Chromosome"/>
</dbReference>
<dbReference type="GO" id="GO:0005737">
    <property type="term" value="C:cytoplasm"/>
    <property type="evidence" value="ECO:0007669"/>
    <property type="project" value="UniProtKB-ARBA"/>
</dbReference>
<dbReference type="GO" id="GO:1990904">
    <property type="term" value="C:ribonucleoprotein complex"/>
    <property type="evidence" value="ECO:0007669"/>
    <property type="project" value="UniProtKB-KW"/>
</dbReference>
<dbReference type="GO" id="GO:0005840">
    <property type="term" value="C:ribosome"/>
    <property type="evidence" value="ECO:0007669"/>
    <property type="project" value="UniProtKB-KW"/>
</dbReference>
<dbReference type="GO" id="GO:0003735">
    <property type="term" value="F:structural constituent of ribosome"/>
    <property type="evidence" value="ECO:0007669"/>
    <property type="project" value="InterPro"/>
</dbReference>
<dbReference type="GO" id="GO:0006412">
    <property type="term" value="P:translation"/>
    <property type="evidence" value="ECO:0007669"/>
    <property type="project" value="UniProtKB-UniRule"/>
</dbReference>
<dbReference type="HAMAP" id="MF_00251">
    <property type="entry name" value="Ribosomal_bL36"/>
    <property type="match status" value="1"/>
</dbReference>
<dbReference type="InterPro" id="IPR000473">
    <property type="entry name" value="Ribosomal_bL36"/>
</dbReference>
<dbReference type="InterPro" id="IPR035977">
    <property type="entry name" value="Ribosomal_bL36_sp"/>
</dbReference>
<dbReference type="NCBIfam" id="TIGR01022">
    <property type="entry name" value="rpmJ_bact"/>
    <property type="match status" value="1"/>
</dbReference>
<dbReference type="PANTHER" id="PTHR42888">
    <property type="entry name" value="50S RIBOSOMAL PROTEIN L36, CHLOROPLASTIC"/>
    <property type="match status" value="1"/>
</dbReference>
<dbReference type="PANTHER" id="PTHR42888:SF1">
    <property type="entry name" value="LARGE RIBOSOMAL SUBUNIT PROTEIN BL36C"/>
    <property type="match status" value="1"/>
</dbReference>
<dbReference type="Pfam" id="PF00444">
    <property type="entry name" value="Ribosomal_L36"/>
    <property type="match status" value="1"/>
</dbReference>
<dbReference type="SUPFAM" id="SSF57840">
    <property type="entry name" value="Ribosomal protein L36"/>
    <property type="match status" value="1"/>
</dbReference>
<dbReference type="PROSITE" id="PS00828">
    <property type="entry name" value="RIBOSOMAL_L36"/>
    <property type="match status" value="1"/>
</dbReference>
<comment type="similarity">
    <text evidence="1">Belongs to the bacterial ribosomal protein bL36 family.</text>
</comment>
<organism>
    <name type="scientific">Limosilactobacillus reuteri (strain DSM 20016)</name>
    <name type="common">Lactobacillus reuteri</name>
    <dbReference type="NCBI Taxonomy" id="557436"/>
    <lineage>
        <taxon>Bacteria</taxon>
        <taxon>Bacillati</taxon>
        <taxon>Bacillota</taxon>
        <taxon>Bacilli</taxon>
        <taxon>Lactobacillales</taxon>
        <taxon>Lactobacillaceae</taxon>
        <taxon>Limosilactobacillus</taxon>
    </lineage>
</organism>